<proteinExistence type="inferred from homology"/>
<protein>
    <recommendedName>
        <fullName evidence="2">Small ribosomal subunit protein uS12cy</fullName>
    </recommendedName>
    <alternativeName>
        <fullName evidence="3">30S ribosomal protein S12-B, chloroplastic</fullName>
    </alternativeName>
</protein>
<reference key="1">
    <citation type="submission" date="2007-03" db="EMBL/GenBank/DDBJ databases">
        <title>Sequence analysis of Arabidopsis pumila JS2 chloroplast DNA.</title>
        <authorList>
            <person name="Hosouchi T."/>
            <person name="Tsuruoka H."/>
            <person name="Kotani H."/>
        </authorList>
    </citation>
    <scope>NUCLEOTIDE SEQUENCE [LARGE SCALE GENOMIC DNA]</scope>
</reference>
<dbReference type="EMBL" id="AP009368">
    <property type="protein sequence ID" value="BAF49985.1"/>
    <property type="molecule type" value="Genomic_DNA"/>
</dbReference>
<dbReference type="SMR" id="A4QJX7"/>
<dbReference type="GO" id="GO:0009507">
    <property type="term" value="C:chloroplast"/>
    <property type="evidence" value="ECO:0007669"/>
    <property type="project" value="UniProtKB-SubCell"/>
</dbReference>
<dbReference type="GO" id="GO:0015935">
    <property type="term" value="C:small ribosomal subunit"/>
    <property type="evidence" value="ECO:0007669"/>
    <property type="project" value="InterPro"/>
</dbReference>
<dbReference type="GO" id="GO:0019843">
    <property type="term" value="F:rRNA binding"/>
    <property type="evidence" value="ECO:0007669"/>
    <property type="project" value="UniProtKB-UniRule"/>
</dbReference>
<dbReference type="GO" id="GO:0003735">
    <property type="term" value="F:structural constituent of ribosome"/>
    <property type="evidence" value="ECO:0007669"/>
    <property type="project" value="InterPro"/>
</dbReference>
<dbReference type="GO" id="GO:0006412">
    <property type="term" value="P:translation"/>
    <property type="evidence" value="ECO:0007669"/>
    <property type="project" value="UniProtKB-UniRule"/>
</dbReference>
<dbReference type="CDD" id="cd03368">
    <property type="entry name" value="Ribosomal_S12"/>
    <property type="match status" value="1"/>
</dbReference>
<dbReference type="FunFam" id="2.40.50.140:FF:000008">
    <property type="entry name" value="30S ribosomal protein S12, chloroplastic"/>
    <property type="match status" value="1"/>
</dbReference>
<dbReference type="Gene3D" id="2.40.50.140">
    <property type="entry name" value="Nucleic acid-binding proteins"/>
    <property type="match status" value="1"/>
</dbReference>
<dbReference type="HAMAP" id="MF_00403_B">
    <property type="entry name" value="Ribosomal_uS12_B"/>
    <property type="match status" value="1"/>
</dbReference>
<dbReference type="InterPro" id="IPR012340">
    <property type="entry name" value="NA-bd_OB-fold"/>
</dbReference>
<dbReference type="InterPro" id="IPR006032">
    <property type="entry name" value="Ribosomal_uS12"/>
</dbReference>
<dbReference type="InterPro" id="IPR005679">
    <property type="entry name" value="Ribosomal_uS12_bac"/>
</dbReference>
<dbReference type="NCBIfam" id="TIGR00981">
    <property type="entry name" value="rpsL_bact"/>
    <property type="match status" value="1"/>
</dbReference>
<dbReference type="PANTHER" id="PTHR11652">
    <property type="entry name" value="30S RIBOSOMAL PROTEIN S12 FAMILY MEMBER"/>
    <property type="match status" value="1"/>
</dbReference>
<dbReference type="Pfam" id="PF00164">
    <property type="entry name" value="Ribosom_S12_S23"/>
    <property type="match status" value="1"/>
</dbReference>
<dbReference type="PIRSF" id="PIRSF002133">
    <property type="entry name" value="Ribosomal_S12/S23"/>
    <property type="match status" value="1"/>
</dbReference>
<dbReference type="PRINTS" id="PR01034">
    <property type="entry name" value="RIBOSOMALS12"/>
</dbReference>
<dbReference type="SUPFAM" id="SSF50249">
    <property type="entry name" value="Nucleic acid-binding proteins"/>
    <property type="match status" value="1"/>
</dbReference>
<dbReference type="PROSITE" id="PS00055">
    <property type="entry name" value="RIBOSOMAL_S12"/>
    <property type="match status" value="1"/>
</dbReference>
<accession>A4QJX7</accession>
<organism>
    <name type="scientific">Olimarabidopsis pumila</name>
    <name type="common">Dwarf rocket</name>
    <name type="synonym">Arabidopsis griffithiana</name>
    <dbReference type="NCBI Taxonomy" id="74718"/>
    <lineage>
        <taxon>Eukaryota</taxon>
        <taxon>Viridiplantae</taxon>
        <taxon>Streptophyta</taxon>
        <taxon>Embryophyta</taxon>
        <taxon>Tracheophyta</taxon>
        <taxon>Spermatophyta</taxon>
        <taxon>Magnoliopsida</taxon>
        <taxon>eudicotyledons</taxon>
        <taxon>Gunneridae</taxon>
        <taxon>Pentapetalae</taxon>
        <taxon>rosids</taxon>
        <taxon>malvids</taxon>
        <taxon>Brassicales</taxon>
        <taxon>Brassicaceae</taxon>
        <taxon>Alyssopsideae</taxon>
        <taxon>Olimarabidopsis</taxon>
    </lineage>
</organism>
<evidence type="ECO:0000250" key="1"/>
<evidence type="ECO:0000255" key="2">
    <source>
        <dbReference type="HAMAP-Rule" id="MF_00403"/>
    </source>
</evidence>
<evidence type="ECO:0000305" key="3"/>
<geneLocation type="chloroplast"/>
<gene>
    <name type="primary">rps12-B</name>
</gene>
<keyword id="KW-0150">Chloroplast</keyword>
<keyword id="KW-0934">Plastid</keyword>
<keyword id="KW-0687">Ribonucleoprotein</keyword>
<keyword id="KW-0689">Ribosomal protein</keyword>
<keyword id="KW-0694">RNA-binding</keyword>
<keyword id="KW-0699">rRNA-binding</keyword>
<name>RR12B_OLIPU</name>
<feature type="chain" id="PRO_0000296075" description="Small ribosomal subunit protein uS12cy">
    <location>
        <begin position="1"/>
        <end position="124"/>
    </location>
</feature>
<comment type="function">
    <text evidence="1">With S4 and S5 plays an important role in translational accuracy. Located at the interface of the 30S and 50S subunits (By similarity).</text>
</comment>
<comment type="subunit">
    <text evidence="1">Part of the 30S ribosomal subunit.</text>
</comment>
<comment type="subcellular location">
    <subcellularLocation>
        <location>Plastid</location>
        <location>Chloroplast</location>
    </subcellularLocation>
</comment>
<comment type="similarity">
    <text evidence="3">Belongs to the universal ribosomal protein uS12 family.</text>
</comment>
<comment type="caution">
    <text evidence="3">There is 1 gene for this protein in each of the chloroplast inverted repeats; while they are usually identical, in this organism they are not. The other copy is AC A4QJV5.</text>
</comment>
<sequence length="124" mass="13851">MPTIKQLIRNTRQPIRNVTKSPALRGCPQRRGTCTRVYSTITPKKPNSALRKVARVRLTSGFEITAYIPGIGHNLQEHSVVLVRGGRVKDLPGVRYHIVRGTLDAVGVKDRQQGRSKYGVKKPK</sequence>